<protein>
    <recommendedName>
        <fullName>Putative nudix hydrolase 1</fullName>
        <ecNumber>3.6.1.-</ecNumber>
    </recommendedName>
</protein>
<reference key="1">
    <citation type="journal article" date="1998" name="Science">
        <title>Genome sequence of the nematode C. elegans: a platform for investigating biology.</title>
        <authorList>
            <consortium name="The C. elegans sequencing consortium"/>
        </authorList>
    </citation>
    <scope>NUCLEOTIDE SEQUENCE [LARGE SCALE GENOMIC DNA]</scope>
    <source>
        <strain>Bristol N2</strain>
    </source>
</reference>
<accession>O45830</accession>
<keyword id="KW-0378">Hydrolase</keyword>
<keyword id="KW-0460">Magnesium</keyword>
<keyword id="KW-0464">Manganese</keyword>
<keyword id="KW-0479">Metal-binding</keyword>
<keyword id="KW-1185">Reference proteome</keyword>
<dbReference type="EC" id="3.6.1.-"/>
<dbReference type="EMBL" id="Z82053">
    <property type="protein sequence ID" value="CAB04835.1"/>
    <property type="molecule type" value="Genomic_DNA"/>
</dbReference>
<dbReference type="PIR" id="T25296">
    <property type="entry name" value="T25296"/>
</dbReference>
<dbReference type="RefSeq" id="NP_493209.1">
    <property type="nucleotide sequence ID" value="NM_060808.4"/>
</dbReference>
<dbReference type="SMR" id="O45830"/>
<dbReference type="BioGRID" id="38535">
    <property type="interactions" value="5"/>
</dbReference>
<dbReference type="DIP" id="DIP-26022N"/>
<dbReference type="FunCoup" id="O45830">
    <property type="interactions" value="50"/>
</dbReference>
<dbReference type="IntAct" id="O45830">
    <property type="interactions" value="2"/>
</dbReference>
<dbReference type="STRING" id="6239.T26E3.2.1"/>
<dbReference type="iPTMnet" id="O45830"/>
<dbReference type="PaxDb" id="6239-T26E3.2"/>
<dbReference type="PeptideAtlas" id="O45830"/>
<dbReference type="EnsemblMetazoa" id="T26E3.2.1">
    <property type="protein sequence ID" value="T26E3.2.1"/>
    <property type="gene ID" value="WBGene00003578"/>
</dbReference>
<dbReference type="GeneID" id="173138"/>
<dbReference type="KEGG" id="cel:CELE_T26E3.2"/>
<dbReference type="UCSC" id="T26E3.2">
    <property type="organism name" value="c. elegans"/>
</dbReference>
<dbReference type="AGR" id="WB:WBGene00003578"/>
<dbReference type="CTD" id="173138"/>
<dbReference type="WormBase" id="T26E3.2">
    <property type="protein sequence ID" value="CE14186"/>
    <property type="gene ID" value="WBGene00003578"/>
    <property type="gene designation" value="ndx-1"/>
</dbReference>
<dbReference type="eggNOG" id="KOG0648">
    <property type="taxonomic scope" value="Eukaryota"/>
</dbReference>
<dbReference type="GeneTree" id="ENSGT00390000002931"/>
<dbReference type="HOGENOM" id="CLU_061042_0_0_1"/>
<dbReference type="InParanoid" id="O45830"/>
<dbReference type="OMA" id="PRYHWIP"/>
<dbReference type="OrthoDB" id="10005910at2759"/>
<dbReference type="PhylomeDB" id="O45830"/>
<dbReference type="Reactome" id="R-CEL-2393930">
    <property type="pathway name" value="Phosphate bond hydrolysis by NUDT proteins"/>
</dbReference>
<dbReference type="PRO" id="PR:O45830"/>
<dbReference type="Proteomes" id="UP000001940">
    <property type="component" value="Chromosome I"/>
</dbReference>
<dbReference type="Bgee" id="WBGene00003578">
    <property type="expression patterns" value="Expressed in pharyngeal muscle cell (C elegans) and 3 other cell types or tissues"/>
</dbReference>
<dbReference type="GO" id="GO:0016529">
    <property type="term" value="C:sarcoplasmic reticulum"/>
    <property type="evidence" value="ECO:0007005"/>
    <property type="project" value="WormBase"/>
</dbReference>
<dbReference type="GO" id="GO:0044715">
    <property type="term" value="F:8-oxo-dGDP phosphatase activity"/>
    <property type="evidence" value="ECO:0000318"/>
    <property type="project" value="GO_Central"/>
</dbReference>
<dbReference type="GO" id="GO:0044716">
    <property type="term" value="F:8-oxo-GDP phosphatase activity"/>
    <property type="evidence" value="ECO:0000318"/>
    <property type="project" value="GO_Central"/>
</dbReference>
<dbReference type="GO" id="GO:0046872">
    <property type="term" value="F:metal ion binding"/>
    <property type="evidence" value="ECO:0007669"/>
    <property type="project" value="UniProtKB-KW"/>
</dbReference>
<dbReference type="CDD" id="cd04671">
    <property type="entry name" value="NUDIX_8DGDPP_Nudt18"/>
    <property type="match status" value="1"/>
</dbReference>
<dbReference type="FunFam" id="3.90.79.10:FF:000080">
    <property type="entry name" value="8-oxo-dGDP phosphatase NUDT18"/>
    <property type="match status" value="1"/>
</dbReference>
<dbReference type="Gene3D" id="3.90.79.10">
    <property type="entry name" value="Nucleoside Triphosphate Pyrophosphohydrolase"/>
    <property type="match status" value="1"/>
</dbReference>
<dbReference type="InterPro" id="IPR020476">
    <property type="entry name" value="Nudix_hydrolase"/>
</dbReference>
<dbReference type="InterPro" id="IPR015797">
    <property type="entry name" value="NUDIX_hydrolase-like_dom_sf"/>
</dbReference>
<dbReference type="InterPro" id="IPR020084">
    <property type="entry name" value="NUDIX_hydrolase_CS"/>
</dbReference>
<dbReference type="InterPro" id="IPR000086">
    <property type="entry name" value="NUDIX_hydrolase_dom"/>
</dbReference>
<dbReference type="InterPro" id="IPR042970">
    <property type="entry name" value="NUDT18_NUDIX"/>
</dbReference>
<dbReference type="PANTHER" id="PTHR22769:SF56">
    <property type="entry name" value="8-OXO-DGDP PHOSPHATASE NUDT18"/>
    <property type="match status" value="1"/>
</dbReference>
<dbReference type="PANTHER" id="PTHR22769">
    <property type="entry name" value="MUTT/NUDIX HYDROLASE"/>
    <property type="match status" value="1"/>
</dbReference>
<dbReference type="Pfam" id="PF00293">
    <property type="entry name" value="NUDIX"/>
    <property type="match status" value="1"/>
</dbReference>
<dbReference type="PRINTS" id="PR00502">
    <property type="entry name" value="NUDIXFAMILY"/>
</dbReference>
<dbReference type="SUPFAM" id="SSF55811">
    <property type="entry name" value="Nudix"/>
    <property type="match status" value="1"/>
</dbReference>
<dbReference type="PROSITE" id="PS51462">
    <property type="entry name" value="NUDIX"/>
    <property type="match status" value="1"/>
</dbReference>
<dbReference type="PROSITE" id="PS00893">
    <property type="entry name" value="NUDIX_BOX"/>
    <property type="match status" value="1"/>
</dbReference>
<feature type="chain" id="PRO_0000057133" description="Putative nudix hydrolase 1">
    <location>
        <begin position="1"/>
        <end position="365"/>
    </location>
</feature>
<feature type="domain" description="Nudix hydrolase" evidence="2">
    <location>
        <begin position="72"/>
        <end position="201"/>
    </location>
</feature>
<feature type="short sequence motif" description="Nudix box">
    <location>
        <begin position="109"/>
        <end position="130"/>
    </location>
</feature>
<feature type="binding site" evidence="1">
    <location>
        <position position="124"/>
    </location>
    <ligand>
        <name>Mg(2+)</name>
        <dbReference type="ChEBI" id="CHEBI:18420"/>
    </ligand>
</feature>
<feature type="binding site" evidence="1">
    <location>
        <position position="128"/>
    </location>
    <ligand>
        <name>Mg(2+)</name>
        <dbReference type="ChEBI" id="CHEBI:18420"/>
    </ligand>
</feature>
<organism>
    <name type="scientific">Caenorhabditis elegans</name>
    <dbReference type="NCBI Taxonomy" id="6239"/>
    <lineage>
        <taxon>Eukaryota</taxon>
        <taxon>Metazoa</taxon>
        <taxon>Ecdysozoa</taxon>
        <taxon>Nematoda</taxon>
        <taxon>Chromadorea</taxon>
        <taxon>Rhabditida</taxon>
        <taxon>Rhabditina</taxon>
        <taxon>Rhabditomorpha</taxon>
        <taxon>Rhabditoidea</taxon>
        <taxon>Rhabditidae</taxon>
        <taxon>Peloderinae</taxon>
        <taxon>Caenorhabditis</taxon>
    </lineage>
</organism>
<evidence type="ECO:0000250" key="1"/>
<evidence type="ECO:0000255" key="2">
    <source>
        <dbReference type="PROSITE-ProRule" id="PRU00794"/>
    </source>
</evidence>
<evidence type="ECO:0000305" key="3"/>
<proteinExistence type="inferred from homology"/>
<name>NDX1_CAEEL</name>
<comment type="function">
    <text evidence="1">Probably mediates the hydrolysis of some nucleoside diphosphate derivatives.</text>
</comment>
<comment type="cofactor">
    <cofactor evidence="1">
        <name>Mg(2+)</name>
        <dbReference type="ChEBI" id="CHEBI:18420"/>
    </cofactor>
    <cofactor evidence="1">
        <name>Mn(2+)</name>
        <dbReference type="ChEBI" id="CHEBI:29035"/>
    </cofactor>
</comment>
<comment type="similarity">
    <text evidence="3">Belongs to the Nudix hydrolase family.</text>
</comment>
<sequence>MPLGKLDLVEEEYIAESGDHTPEASRLMGNGDSVVENLNGHTNGAVAKKKNEPRVPDMQLGKCRYVRLHDNVNYVAAAIILRNQGDDTEVLLIQEAKKSCRGKWYMPAGRVEAGETIEEAVVREVKEETGYSCDVVELLSLQVQGSGWYRYAFYCNITGGDLKTEPDQESLAAEWYNIKDLKANKVQLRGRDFIRLVDEAVTYRTHGPVDSIPRVMPLNQNVAGLFLEFMIVKHSRDGLRTEVLVHKSIKDETYLLEEEQPFPTVEFGFEYFFAMVVSKCYRHLLEEGANVVFTPSHVTRIKCHPKPMESLAHGVSIRVYCEHKQSASKAIIRSPRYHWISVESPETRQRFHMAQKQFRPSLHML</sequence>
<gene>
    <name type="primary">ndx-1</name>
    <name type="ORF">T26E3.2</name>
</gene>